<name>YQFI_ECOLI</name>
<reference key="1">
    <citation type="journal article" date="1997" name="Science">
        <title>The complete genome sequence of Escherichia coli K-12.</title>
        <authorList>
            <person name="Blattner F.R."/>
            <person name="Plunkett G. III"/>
            <person name="Bloch C.A."/>
            <person name="Perna N.T."/>
            <person name="Burland V."/>
            <person name="Riley M."/>
            <person name="Collado-Vides J."/>
            <person name="Glasner J.D."/>
            <person name="Rode C.K."/>
            <person name="Mayhew G.F."/>
            <person name="Gregor J."/>
            <person name="Davis N.W."/>
            <person name="Kirkpatrick H.A."/>
            <person name="Goeden M.A."/>
            <person name="Rose D.J."/>
            <person name="Mau B."/>
            <person name="Shao Y."/>
        </authorList>
    </citation>
    <scope>NUCLEOTIDE SEQUENCE [LARGE SCALE GENOMIC DNA]</scope>
    <source>
        <strain>K12 / MG1655 / ATCC 47076</strain>
    </source>
</reference>
<reference key="2">
    <citation type="journal article" date="2018" name="Proteomics">
        <title>Identifying new small proteins in Escherichia coli.</title>
        <authorList>
            <person name="VanOrsdel C.E."/>
            <person name="Kelly J.P."/>
            <person name="Burke B.N."/>
            <person name="Lein C.D."/>
            <person name="Oufiero C.E."/>
            <person name="Sanchez J.F."/>
            <person name="Wimmers L.E."/>
            <person name="Hearn D.J."/>
            <person name="Abuikhdair F.J."/>
            <person name="Barnhart K.R."/>
            <person name="Duley M.L."/>
            <person name="Ernst S.E.G."/>
            <person name="Kenerson B.A."/>
            <person name="Serafin A.J."/>
            <person name="Hemm M.R."/>
        </authorList>
    </citation>
    <scope>IDENTIFICATION</scope>
    <scope>INDUCTION</scope>
</reference>
<sequence>MSKNTKSKNNGIRKYNAKTEVKLVYFK</sequence>
<dbReference type="EMBL" id="U00096">
    <property type="protein sequence ID" value="AYC08241.1"/>
    <property type="molecule type" value="Genomic_DNA"/>
</dbReference>
<dbReference type="EnsemblBacteria" id="AYC08241">
    <property type="protein sequence ID" value="AYC08241"/>
    <property type="gene ID" value="b4754"/>
</dbReference>
<dbReference type="InParanoid" id="P0DPP5"/>
<dbReference type="BioCyc" id="EcoCyc:MONOMER0-4432"/>
<dbReference type="PRO" id="PR:P0DPP5"/>
<dbReference type="Proteomes" id="UP000000625">
    <property type="component" value="Chromosome"/>
</dbReference>
<dbReference type="Pfam" id="PF23690">
    <property type="entry name" value="YqfI"/>
    <property type="match status" value="1"/>
</dbReference>
<feature type="chain" id="PRO_0000445183" description="Protein YqfI">
    <location>
        <begin position="1"/>
        <end position="27"/>
    </location>
</feature>
<accession>P0DPP5</accession>
<accession>A0A385XMM6</accession>
<protein>
    <recommendedName>
        <fullName evidence="2">Protein YqfI</fullName>
    </recommendedName>
</protein>
<comment type="induction">
    <text evidence="1">Expressed approximately equally in exponential and stationary phases (at protein level).</text>
</comment>
<proteinExistence type="evidence at protein level"/>
<gene>
    <name evidence="2" type="primary">yqfI</name>
    <name type="ordered locus">b4754</name>
</gene>
<keyword id="KW-1185">Reference proteome</keyword>
<organism>
    <name type="scientific">Escherichia coli (strain K12)</name>
    <dbReference type="NCBI Taxonomy" id="83333"/>
    <lineage>
        <taxon>Bacteria</taxon>
        <taxon>Pseudomonadati</taxon>
        <taxon>Pseudomonadota</taxon>
        <taxon>Gammaproteobacteria</taxon>
        <taxon>Enterobacterales</taxon>
        <taxon>Enterobacteriaceae</taxon>
        <taxon>Escherichia</taxon>
    </lineage>
</organism>
<evidence type="ECO:0000269" key="1">
    <source>
    </source>
</evidence>
<evidence type="ECO:0000303" key="2">
    <source>
    </source>
</evidence>